<comment type="function">
    <text evidence="1">Catalyzes the formation of phosphatidylethanolamine (PtdEtn) from phosphatidylserine (PtdSer).</text>
</comment>
<comment type="catalytic activity">
    <reaction evidence="1">
        <text>a 1,2-diacyl-sn-glycero-3-phospho-L-serine + H(+) = a 1,2-diacyl-sn-glycero-3-phosphoethanolamine + CO2</text>
        <dbReference type="Rhea" id="RHEA:20828"/>
        <dbReference type="ChEBI" id="CHEBI:15378"/>
        <dbReference type="ChEBI" id="CHEBI:16526"/>
        <dbReference type="ChEBI" id="CHEBI:57262"/>
        <dbReference type="ChEBI" id="CHEBI:64612"/>
        <dbReference type="EC" id="4.1.1.65"/>
    </reaction>
</comment>
<comment type="cofactor">
    <cofactor evidence="1">
        <name>pyruvate</name>
        <dbReference type="ChEBI" id="CHEBI:15361"/>
    </cofactor>
    <text evidence="1">Binds 1 pyruvoyl group covalently per subunit.</text>
</comment>
<comment type="pathway">
    <text evidence="1">Phospholipid metabolism; phosphatidylethanolamine biosynthesis; phosphatidylethanolamine from CDP-diacylglycerol: step 2/2.</text>
</comment>
<comment type="subunit">
    <text evidence="1">Heterodimer of a large membrane-associated beta subunit and a small pyruvoyl-containing alpha subunit.</text>
</comment>
<comment type="subcellular location">
    <subcellularLocation>
        <location evidence="1">Cell membrane</location>
        <topology evidence="1">Peripheral membrane protein</topology>
    </subcellularLocation>
</comment>
<comment type="PTM">
    <text evidence="1">Is synthesized initially as an inactive proenzyme. Formation of the active enzyme involves a self-maturation process in which the active site pyruvoyl group is generated from an internal serine residue via an autocatalytic post-translational modification. Two non-identical subunits are generated from the proenzyme in this reaction, and the pyruvate is formed at the N-terminus of the alpha chain, which is derived from the carboxyl end of the proenzyme. The autoendoproteolytic cleavage occurs by a canonical serine protease mechanism, in which the side chain hydroxyl group of the serine supplies its oxygen atom to form the C-terminus of the beta chain, while the remainder of the serine residue undergoes an oxidative deamination to produce ammonia and the pyruvoyl prosthetic group on the alpha chain. During this reaction, the Ser that is part of the protease active site of the proenzyme becomes the pyruvoyl prosthetic group, which constitutes an essential element of the active site of the mature decarboxylase.</text>
</comment>
<comment type="similarity">
    <text evidence="1">Belongs to the phosphatidylserine decarboxylase family. PSD-B subfamily. Prokaryotic type II sub-subfamily.</text>
</comment>
<accession>B0BAF4</accession>
<gene>
    <name evidence="1" type="primary">psd</name>
    <name type="ordered locus">CTLon_0068</name>
</gene>
<reference key="1">
    <citation type="journal article" date="2008" name="Genome Res.">
        <title>Chlamydia trachomatis: genome sequence analysis of lymphogranuloma venereum isolates.</title>
        <authorList>
            <person name="Thomson N.R."/>
            <person name="Holden M.T.G."/>
            <person name="Carder C."/>
            <person name="Lennard N."/>
            <person name="Lockey S.J."/>
            <person name="Marsh P."/>
            <person name="Skipp P."/>
            <person name="O'Connor C.D."/>
            <person name="Goodhead I."/>
            <person name="Norbertzcak H."/>
            <person name="Harris B."/>
            <person name="Ormond D."/>
            <person name="Rance R."/>
            <person name="Quail M.A."/>
            <person name="Parkhill J."/>
            <person name="Stephens R.S."/>
            <person name="Clarke I.N."/>
        </authorList>
    </citation>
    <scope>NUCLEOTIDE SEQUENCE [LARGE SCALE GENOMIC DNA]</scope>
    <source>
        <strain>UCH-1/proctitis</strain>
    </source>
</reference>
<evidence type="ECO:0000255" key="1">
    <source>
        <dbReference type="HAMAP-Rule" id="MF_00663"/>
    </source>
</evidence>
<name>PSD_CHLTB</name>
<proteinExistence type="inferred from homology"/>
<dbReference type="EC" id="4.1.1.65" evidence="1"/>
<dbReference type="EMBL" id="AM884177">
    <property type="protein sequence ID" value="CAP06466.1"/>
    <property type="molecule type" value="Genomic_DNA"/>
</dbReference>
<dbReference type="RefSeq" id="WP_012263544.1">
    <property type="nucleotide sequence ID" value="NC_010280.2"/>
</dbReference>
<dbReference type="SMR" id="B0BAF4"/>
<dbReference type="KEGG" id="ctl:CTLon_0068"/>
<dbReference type="HOGENOM" id="CLU_029061_2_2_0"/>
<dbReference type="UniPathway" id="UPA00558">
    <property type="reaction ID" value="UER00616"/>
</dbReference>
<dbReference type="Proteomes" id="UP001154401">
    <property type="component" value="Chromosome"/>
</dbReference>
<dbReference type="GO" id="GO:0005886">
    <property type="term" value="C:plasma membrane"/>
    <property type="evidence" value="ECO:0007669"/>
    <property type="project" value="UniProtKB-SubCell"/>
</dbReference>
<dbReference type="GO" id="GO:0004609">
    <property type="term" value="F:phosphatidylserine decarboxylase activity"/>
    <property type="evidence" value="ECO:0007669"/>
    <property type="project" value="UniProtKB-UniRule"/>
</dbReference>
<dbReference type="GO" id="GO:0006646">
    <property type="term" value="P:phosphatidylethanolamine biosynthetic process"/>
    <property type="evidence" value="ECO:0007669"/>
    <property type="project" value="UniProtKB-UniRule"/>
</dbReference>
<dbReference type="HAMAP" id="MF_00663">
    <property type="entry name" value="PS_decarb_PSD_B_type2"/>
    <property type="match status" value="1"/>
</dbReference>
<dbReference type="InterPro" id="IPR003817">
    <property type="entry name" value="PS_Dcarbxylase"/>
</dbReference>
<dbReference type="InterPro" id="IPR033177">
    <property type="entry name" value="PSD-B"/>
</dbReference>
<dbReference type="InterPro" id="IPR033179">
    <property type="entry name" value="PSD_type2_pro"/>
</dbReference>
<dbReference type="NCBIfam" id="NF001941">
    <property type="entry name" value="PRK00723.1"/>
    <property type="match status" value="1"/>
</dbReference>
<dbReference type="NCBIfam" id="TIGR00163">
    <property type="entry name" value="PS_decarb"/>
    <property type="match status" value="1"/>
</dbReference>
<dbReference type="PANTHER" id="PTHR10067">
    <property type="entry name" value="PHOSPHATIDYLSERINE DECARBOXYLASE"/>
    <property type="match status" value="1"/>
</dbReference>
<dbReference type="PANTHER" id="PTHR10067:SF17">
    <property type="entry name" value="PHOSPHATIDYLSERINE DECARBOXYLASE PROENZYME 2"/>
    <property type="match status" value="1"/>
</dbReference>
<dbReference type="Pfam" id="PF02666">
    <property type="entry name" value="PS_Dcarbxylase"/>
    <property type="match status" value="1"/>
</dbReference>
<sequence>MAAREMLYVNRETGKVEQERIICSSLVKFFIETRIGRALYSVLCKNSLFSRIVGWCQRLRVTRYFIKPFVTKYRICIEESASPLHDYASFNDFFVRKLKPDARPICQGEDICVTPADGAYLVFPSMADLSLFTIKNKPFSLESFLGDPQLAHQYAQGSMAIARLAPFDYHRFHFPIAGIAEAPRRINGHLFSIHPLMLKRNFEVFTENKREITIITSKEFGEVAYVEVGALNVGSIHQTFSPGSYVKKGAEKGFFAFGGSTVVLLFQPQRIIFDADLVGYSAQGLETRCRMGQSLGKHFSS</sequence>
<protein>
    <recommendedName>
        <fullName evidence="1">Phosphatidylserine decarboxylase proenzyme</fullName>
        <ecNumber evidence="1">4.1.1.65</ecNumber>
    </recommendedName>
    <component>
        <recommendedName>
            <fullName evidence="1">Phosphatidylserine decarboxylase alpha chain</fullName>
        </recommendedName>
    </component>
    <component>
        <recommendedName>
            <fullName evidence="1">Phosphatidylserine decarboxylase beta chain</fullName>
        </recommendedName>
    </component>
</protein>
<feature type="chain" id="PRO_1000131430" description="Phosphatidylserine decarboxylase beta chain" evidence="1">
    <location>
        <begin position="1"/>
        <end position="259"/>
    </location>
</feature>
<feature type="chain" id="PRO_1000131431" description="Phosphatidylserine decarboxylase alpha chain" evidence="1">
    <location>
        <begin position="260"/>
        <end position="301"/>
    </location>
</feature>
<feature type="active site" description="Charge relay system; for autoendoproteolytic cleavage activity" evidence="1">
    <location>
        <position position="117"/>
    </location>
</feature>
<feature type="active site" description="Charge relay system; for autoendoproteolytic cleavage activity" evidence="1">
    <location>
        <position position="173"/>
    </location>
</feature>
<feature type="active site" description="Charge relay system; for autoendoproteolytic cleavage activity" evidence="1">
    <location>
        <position position="260"/>
    </location>
</feature>
<feature type="active site" description="Schiff-base intermediate with substrate; via pyruvic acid; for decarboxylase activity" evidence="1">
    <location>
        <position position="260"/>
    </location>
</feature>
<feature type="site" description="Cleavage (non-hydrolytic); by autocatalysis" evidence="1">
    <location>
        <begin position="259"/>
        <end position="260"/>
    </location>
</feature>
<feature type="modified residue" description="Pyruvic acid (Ser); by autocatalysis" evidence="1">
    <location>
        <position position="260"/>
    </location>
</feature>
<keyword id="KW-1003">Cell membrane</keyword>
<keyword id="KW-0210">Decarboxylase</keyword>
<keyword id="KW-0444">Lipid biosynthesis</keyword>
<keyword id="KW-0443">Lipid metabolism</keyword>
<keyword id="KW-0456">Lyase</keyword>
<keyword id="KW-0472">Membrane</keyword>
<keyword id="KW-0594">Phospholipid biosynthesis</keyword>
<keyword id="KW-1208">Phospholipid metabolism</keyword>
<keyword id="KW-0670">Pyruvate</keyword>
<keyword id="KW-0865">Zymogen</keyword>
<organism>
    <name type="scientific">Chlamydia trachomatis serovar L2b (strain UCH-1/proctitis)</name>
    <dbReference type="NCBI Taxonomy" id="471473"/>
    <lineage>
        <taxon>Bacteria</taxon>
        <taxon>Pseudomonadati</taxon>
        <taxon>Chlamydiota</taxon>
        <taxon>Chlamydiia</taxon>
        <taxon>Chlamydiales</taxon>
        <taxon>Chlamydiaceae</taxon>
        <taxon>Chlamydia/Chlamydophila group</taxon>
        <taxon>Chlamydia</taxon>
    </lineage>
</organism>